<reference key="1">
    <citation type="journal article" date="2001" name="Science">
        <title>Complete genome sequence of a virulent isolate of Streptococcus pneumoniae.</title>
        <authorList>
            <person name="Tettelin H."/>
            <person name="Nelson K.E."/>
            <person name="Paulsen I.T."/>
            <person name="Eisen J.A."/>
            <person name="Read T.D."/>
            <person name="Peterson S.N."/>
            <person name="Heidelberg J.F."/>
            <person name="DeBoy R.T."/>
            <person name="Haft D.H."/>
            <person name="Dodson R.J."/>
            <person name="Durkin A.S."/>
            <person name="Gwinn M.L."/>
            <person name="Kolonay J.F."/>
            <person name="Nelson W.C."/>
            <person name="Peterson J.D."/>
            <person name="Umayam L.A."/>
            <person name="White O."/>
            <person name="Salzberg S.L."/>
            <person name="Lewis M.R."/>
            <person name="Radune D."/>
            <person name="Holtzapple E.K."/>
            <person name="Khouri H.M."/>
            <person name="Wolf A.M."/>
            <person name="Utterback T.R."/>
            <person name="Hansen C.L."/>
            <person name="McDonald L.A."/>
            <person name="Feldblyum T.V."/>
            <person name="Angiuoli S.V."/>
            <person name="Dickinson T."/>
            <person name="Hickey E.K."/>
            <person name="Holt I.E."/>
            <person name="Loftus B.J."/>
            <person name="Yang F."/>
            <person name="Smith H.O."/>
            <person name="Venter J.C."/>
            <person name="Dougherty B.A."/>
            <person name="Morrison D.A."/>
            <person name="Hollingshead S.K."/>
            <person name="Fraser C.M."/>
        </authorList>
    </citation>
    <scope>NUCLEOTIDE SEQUENCE [LARGE SCALE GENOMIC DNA]</scope>
    <source>
        <strain>ATCC BAA-334 / TIGR4</strain>
    </source>
</reference>
<accession>Q97S89</accession>
<gene>
    <name evidence="1" type="primary">pgk</name>
    <name type="ordered locus">SP_0499</name>
</gene>
<protein>
    <recommendedName>
        <fullName evidence="1">Phosphoglycerate kinase</fullName>
        <ecNumber evidence="1">2.7.2.3</ecNumber>
    </recommendedName>
</protein>
<name>PGK_STRPN</name>
<sequence>MAKLTVKDVDLKGKKVLVRVDFNVPLKDGVITNDNRITAALPTIKYIIEQGGRAILFSHLGRVKEEADKAGKSLAPVAADLAAKLGQDVVFPGVTRGAELEAAINALEDGQVLLVENTRYEDVDGKKESKNDPELGKYWASLGDGIFVNDAFGTAHRAHASNVGISANVEKAVAGFLLENEIAYIQEAVETPERPFVAILGGSKVSDKIGVIENLLEKADNVLIGGGMTYTFYKAQGIEIGNSLVEEDKLDVAKALLEKANGKLILPVDSKEANAFAGYTEVRDTEGEAVSEGFLGLDIGPKSIAKFDEALTGAKTVVWNGPMGVFENPDFQAGTIGVMDAIVKQPGVKSIIGGGDSAAAAINLGRADKFSWISTGGGASMELLEGKVLPGLAALTEK</sequence>
<comment type="catalytic activity">
    <reaction evidence="1">
        <text>(2R)-3-phosphoglycerate + ATP = (2R)-3-phospho-glyceroyl phosphate + ADP</text>
        <dbReference type="Rhea" id="RHEA:14801"/>
        <dbReference type="ChEBI" id="CHEBI:30616"/>
        <dbReference type="ChEBI" id="CHEBI:57604"/>
        <dbReference type="ChEBI" id="CHEBI:58272"/>
        <dbReference type="ChEBI" id="CHEBI:456216"/>
        <dbReference type="EC" id="2.7.2.3"/>
    </reaction>
</comment>
<comment type="pathway">
    <text evidence="1">Carbohydrate degradation; glycolysis; pyruvate from D-glyceraldehyde 3-phosphate: step 2/5.</text>
</comment>
<comment type="subunit">
    <text evidence="1">Monomer.</text>
</comment>
<comment type="subcellular location">
    <subcellularLocation>
        <location evidence="1">Cytoplasm</location>
    </subcellularLocation>
</comment>
<comment type="similarity">
    <text evidence="1">Belongs to the phosphoglycerate kinase family.</text>
</comment>
<proteinExistence type="inferred from homology"/>
<dbReference type="EC" id="2.7.2.3" evidence="1"/>
<dbReference type="EMBL" id="AE005672">
    <property type="protein sequence ID" value="AAK74657.1"/>
    <property type="molecule type" value="Genomic_DNA"/>
</dbReference>
<dbReference type="PIR" id="H95057">
    <property type="entry name" value="H95057"/>
</dbReference>
<dbReference type="RefSeq" id="WP_001096747.1">
    <property type="nucleotide sequence ID" value="NZ_CP155539.1"/>
</dbReference>
<dbReference type="SMR" id="Q97S89"/>
<dbReference type="PaxDb" id="170187-SP_0499"/>
<dbReference type="EnsemblBacteria" id="AAK74657">
    <property type="protein sequence ID" value="AAK74657"/>
    <property type="gene ID" value="SP_0499"/>
</dbReference>
<dbReference type="KEGG" id="spn:SP_0499"/>
<dbReference type="eggNOG" id="COG0126">
    <property type="taxonomic scope" value="Bacteria"/>
</dbReference>
<dbReference type="PhylomeDB" id="Q97S89"/>
<dbReference type="BioCyc" id="SPNE170187:G1FZB-514-MONOMER"/>
<dbReference type="UniPathway" id="UPA00109">
    <property type="reaction ID" value="UER00185"/>
</dbReference>
<dbReference type="Proteomes" id="UP000000585">
    <property type="component" value="Chromosome"/>
</dbReference>
<dbReference type="GO" id="GO:0005829">
    <property type="term" value="C:cytosol"/>
    <property type="evidence" value="ECO:0007669"/>
    <property type="project" value="TreeGrafter"/>
</dbReference>
<dbReference type="GO" id="GO:0043531">
    <property type="term" value="F:ADP binding"/>
    <property type="evidence" value="ECO:0007669"/>
    <property type="project" value="TreeGrafter"/>
</dbReference>
<dbReference type="GO" id="GO:0005524">
    <property type="term" value="F:ATP binding"/>
    <property type="evidence" value="ECO:0007669"/>
    <property type="project" value="UniProtKB-KW"/>
</dbReference>
<dbReference type="GO" id="GO:0004618">
    <property type="term" value="F:phosphoglycerate kinase activity"/>
    <property type="evidence" value="ECO:0007669"/>
    <property type="project" value="UniProtKB-UniRule"/>
</dbReference>
<dbReference type="GO" id="GO:0006094">
    <property type="term" value="P:gluconeogenesis"/>
    <property type="evidence" value="ECO:0007669"/>
    <property type="project" value="TreeGrafter"/>
</dbReference>
<dbReference type="GO" id="GO:0006096">
    <property type="term" value="P:glycolytic process"/>
    <property type="evidence" value="ECO:0007669"/>
    <property type="project" value="UniProtKB-UniRule"/>
</dbReference>
<dbReference type="FunFam" id="3.40.50.1260:FF:000001">
    <property type="entry name" value="Phosphoglycerate kinase"/>
    <property type="match status" value="1"/>
</dbReference>
<dbReference type="FunFam" id="3.40.50.1260:FF:000008">
    <property type="entry name" value="Phosphoglycerate kinase"/>
    <property type="match status" value="1"/>
</dbReference>
<dbReference type="Gene3D" id="3.40.50.1260">
    <property type="entry name" value="Phosphoglycerate kinase, N-terminal domain"/>
    <property type="match status" value="2"/>
</dbReference>
<dbReference type="HAMAP" id="MF_00145">
    <property type="entry name" value="Phosphoglyc_kinase"/>
    <property type="match status" value="1"/>
</dbReference>
<dbReference type="InterPro" id="IPR001576">
    <property type="entry name" value="Phosphoglycerate_kinase"/>
</dbReference>
<dbReference type="InterPro" id="IPR015911">
    <property type="entry name" value="Phosphoglycerate_kinase_CS"/>
</dbReference>
<dbReference type="InterPro" id="IPR015824">
    <property type="entry name" value="Phosphoglycerate_kinase_N"/>
</dbReference>
<dbReference type="InterPro" id="IPR036043">
    <property type="entry name" value="Phosphoglycerate_kinase_sf"/>
</dbReference>
<dbReference type="PANTHER" id="PTHR11406">
    <property type="entry name" value="PHOSPHOGLYCERATE KINASE"/>
    <property type="match status" value="1"/>
</dbReference>
<dbReference type="PANTHER" id="PTHR11406:SF23">
    <property type="entry name" value="PHOSPHOGLYCERATE KINASE 1, CHLOROPLASTIC-RELATED"/>
    <property type="match status" value="1"/>
</dbReference>
<dbReference type="Pfam" id="PF00162">
    <property type="entry name" value="PGK"/>
    <property type="match status" value="1"/>
</dbReference>
<dbReference type="PIRSF" id="PIRSF000724">
    <property type="entry name" value="Pgk"/>
    <property type="match status" value="1"/>
</dbReference>
<dbReference type="PRINTS" id="PR00477">
    <property type="entry name" value="PHGLYCKINASE"/>
</dbReference>
<dbReference type="SUPFAM" id="SSF53748">
    <property type="entry name" value="Phosphoglycerate kinase"/>
    <property type="match status" value="1"/>
</dbReference>
<dbReference type="PROSITE" id="PS00111">
    <property type="entry name" value="PGLYCERATE_KINASE"/>
    <property type="match status" value="1"/>
</dbReference>
<feature type="chain" id="PRO_0000146015" description="Phosphoglycerate kinase">
    <location>
        <begin position="1"/>
        <end position="398"/>
    </location>
</feature>
<feature type="binding site" evidence="1">
    <location>
        <begin position="21"/>
        <end position="23"/>
    </location>
    <ligand>
        <name>substrate</name>
    </ligand>
</feature>
<feature type="binding site" evidence="1">
    <location>
        <position position="36"/>
    </location>
    <ligand>
        <name>substrate</name>
    </ligand>
</feature>
<feature type="binding site" evidence="1">
    <location>
        <begin position="59"/>
        <end position="62"/>
    </location>
    <ligand>
        <name>substrate</name>
    </ligand>
</feature>
<feature type="binding site" evidence="1">
    <location>
        <position position="119"/>
    </location>
    <ligand>
        <name>substrate</name>
    </ligand>
</feature>
<feature type="binding site" evidence="1">
    <location>
        <position position="157"/>
    </location>
    <ligand>
        <name>substrate</name>
    </ligand>
</feature>
<feature type="binding site" evidence="1">
    <location>
        <position position="208"/>
    </location>
    <ligand>
        <name>ATP</name>
        <dbReference type="ChEBI" id="CHEBI:30616"/>
    </ligand>
</feature>
<feature type="binding site" evidence="1">
    <location>
        <position position="296"/>
    </location>
    <ligand>
        <name>ATP</name>
        <dbReference type="ChEBI" id="CHEBI:30616"/>
    </ligand>
</feature>
<feature type="binding site" evidence="1">
    <location>
        <position position="327"/>
    </location>
    <ligand>
        <name>ATP</name>
        <dbReference type="ChEBI" id="CHEBI:30616"/>
    </ligand>
</feature>
<feature type="binding site" evidence="1">
    <location>
        <begin position="354"/>
        <end position="357"/>
    </location>
    <ligand>
        <name>ATP</name>
        <dbReference type="ChEBI" id="CHEBI:30616"/>
    </ligand>
</feature>
<evidence type="ECO:0000255" key="1">
    <source>
        <dbReference type="HAMAP-Rule" id="MF_00145"/>
    </source>
</evidence>
<keyword id="KW-0067">ATP-binding</keyword>
<keyword id="KW-0963">Cytoplasm</keyword>
<keyword id="KW-0324">Glycolysis</keyword>
<keyword id="KW-0418">Kinase</keyword>
<keyword id="KW-0547">Nucleotide-binding</keyword>
<keyword id="KW-1185">Reference proteome</keyword>
<keyword id="KW-0808">Transferase</keyword>
<organism>
    <name type="scientific">Streptococcus pneumoniae serotype 4 (strain ATCC BAA-334 / TIGR4)</name>
    <dbReference type="NCBI Taxonomy" id="170187"/>
    <lineage>
        <taxon>Bacteria</taxon>
        <taxon>Bacillati</taxon>
        <taxon>Bacillota</taxon>
        <taxon>Bacilli</taxon>
        <taxon>Lactobacillales</taxon>
        <taxon>Streptococcaceae</taxon>
        <taxon>Streptococcus</taxon>
    </lineage>
</organism>